<gene>
    <name evidence="1" type="primary">rsmA</name>
    <name evidence="1" type="synonym">ksgA</name>
    <name type="ordered locus">KPN78578_00470</name>
    <name type="ORF">KPN_00048</name>
</gene>
<organism>
    <name type="scientific">Klebsiella pneumoniae subsp. pneumoniae (strain ATCC 700721 / MGH 78578)</name>
    <dbReference type="NCBI Taxonomy" id="272620"/>
    <lineage>
        <taxon>Bacteria</taxon>
        <taxon>Pseudomonadati</taxon>
        <taxon>Pseudomonadota</taxon>
        <taxon>Gammaproteobacteria</taxon>
        <taxon>Enterobacterales</taxon>
        <taxon>Enterobacteriaceae</taxon>
        <taxon>Klebsiella/Raoultella group</taxon>
        <taxon>Klebsiella</taxon>
        <taxon>Klebsiella pneumoniae complex</taxon>
    </lineage>
</organism>
<name>RSMA_KLEP7</name>
<reference key="1">
    <citation type="submission" date="2006-09" db="EMBL/GenBank/DDBJ databases">
        <authorList>
            <consortium name="The Klebsiella pneumonia Genome Sequencing Project"/>
            <person name="McClelland M."/>
            <person name="Sanderson E.K."/>
            <person name="Spieth J."/>
            <person name="Clifton W.S."/>
            <person name="Latreille P."/>
            <person name="Sabo A."/>
            <person name="Pepin K."/>
            <person name="Bhonagiri V."/>
            <person name="Porwollik S."/>
            <person name="Ali J."/>
            <person name="Wilson R.K."/>
        </authorList>
    </citation>
    <scope>NUCLEOTIDE SEQUENCE [LARGE SCALE GENOMIC DNA]</scope>
    <source>
        <strain>ATCC 700721 / MGH 78578</strain>
    </source>
</reference>
<sequence length="273" mass="30582">MNNRVHQGHLARKRFGQNFLNDQFVIDSIVSAINPQKGQAMVEIGPGLAALTEPVGERLDQLTVIELDRDLAARLQTHPFLGPKLTIYQQDAMTMNFGELAEKMGQPLRVFGNLPYNISTPLMFHLFSYTDAIADMHFMLQKEVVNRLVAGPNSKAYGRLSVMAQYYCQVIPVLEVPPSAFTPPPKVDSAVVRLVPHSTMPYPVKEIRVLSRITTEAFNQRRKTIRNSLGNLFSVEVLTELGIDPAMRAENISVAQYCLMANWLSDNLPTKES</sequence>
<keyword id="KW-0963">Cytoplasm</keyword>
<keyword id="KW-0489">Methyltransferase</keyword>
<keyword id="KW-0694">RNA-binding</keyword>
<keyword id="KW-0698">rRNA processing</keyword>
<keyword id="KW-0949">S-adenosyl-L-methionine</keyword>
<keyword id="KW-0808">Transferase</keyword>
<comment type="function">
    <text evidence="1">Specifically dimethylates two adjacent adenosines (A1518 and A1519) in the loop of a conserved hairpin near the 3'-end of 16S rRNA in the 30S particle. May play a critical role in biogenesis of 30S subunits.</text>
</comment>
<comment type="catalytic activity">
    <reaction evidence="1">
        <text>adenosine(1518)/adenosine(1519) in 16S rRNA + 4 S-adenosyl-L-methionine = N(6)-dimethyladenosine(1518)/N(6)-dimethyladenosine(1519) in 16S rRNA + 4 S-adenosyl-L-homocysteine + 4 H(+)</text>
        <dbReference type="Rhea" id="RHEA:19609"/>
        <dbReference type="Rhea" id="RHEA-COMP:10232"/>
        <dbReference type="Rhea" id="RHEA-COMP:10233"/>
        <dbReference type="ChEBI" id="CHEBI:15378"/>
        <dbReference type="ChEBI" id="CHEBI:57856"/>
        <dbReference type="ChEBI" id="CHEBI:59789"/>
        <dbReference type="ChEBI" id="CHEBI:74411"/>
        <dbReference type="ChEBI" id="CHEBI:74493"/>
        <dbReference type="EC" id="2.1.1.182"/>
    </reaction>
</comment>
<comment type="subcellular location">
    <subcellularLocation>
        <location evidence="1">Cytoplasm</location>
    </subcellularLocation>
</comment>
<comment type="similarity">
    <text evidence="1">Belongs to the class I-like SAM-binding methyltransferase superfamily. rRNA adenine N(6)-methyltransferase family. RsmA subfamily.</text>
</comment>
<evidence type="ECO:0000255" key="1">
    <source>
        <dbReference type="HAMAP-Rule" id="MF_00607"/>
    </source>
</evidence>
<protein>
    <recommendedName>
        <fullName evidence="1">Ribosomal RNA small subunit methyltransferase A</fullName>
        <ecNumber evidence="1">2.1.1.182</ecNumber>
    </recommendedName>
    <alternativeName>
        <fullName evidence="1">16S rRNA (adenine(1518)-N(6)/adenine(1519)-N(6))-dimethyltransferase</fullName>
    </alternativeName>
    <alternativeName>
        <fullName evidence="1">16S rRNA dimethyladenosine transferase</fullName>
    </alternativeName>
    <alternativeName>
        <fullName evidence="1">16S rRNA dimethylase</fullName>
    </alternativeName>
    <alternativeName>
        <fullName evidence="1">S-adenosylmethionine-6-N', N'-adenosyl(rRNA) dimethyltransferase</fullName>
    </alternativeName>
</protein>
<accession>A6T4I7</accession>
<feature type="chain" id="PRO_1000056628" description="Ribosomal RNA small subunit methyltransferase A">
    <location>
        <begin position="1"/>
        <end position="273"/>
    </location>
</feature>
<feature type="binding site" evidence="1">
    <location>
        <position position="18"/>
    </location>
    <ligand>
        <name>S-adenosyl-L-methionine</name>
        <dbReference type="ChEBI" id="CHEBI:59789"/>
    </ligand>
</feature>
<feature type="binding site" evidence="1">
    <location>
        <position position="20"/>
    </location>
    <ligand>
        <name>S-adenosyl-L-methionine</name>
        <dbReference type="ChEBI" id="CHEBI:59789"/>
    </ligand>
</feature>
<feature type="binding site" evidence="1">
    <location>
        <position position="45"/>
    </location>
    <ligand>
        <name>S-adenosyl-L-methionine</name>
        <dbReference type="ChEBI" id="CHEBI:59789"/>
    </ligand>
</feature>
<feature type="binding site" evidence="1">
    <location>
        <position position="66"/>
    </location>
    <ligand>
        <name>S-adenosyl-L-methionine</name>
        <dbReference type="ChEBI" id="CHEBI:59789"/>
    </ligand>
</feature>
<feature type="binding site" evidence="1">
    <location>
        <position position="91"/>
    </location>
    <ligand>
        <name>S-adenosyl-L-methionine</name>
        <dbReference type="ChEBI" id="CHEBI:59789"/>
    </ligand>
</feature>
<feature type="binding site" evidence="1">
    <location>
        <position position="113"/>
    </location>
    <ligand>
        <name>S-adenosyl-L-methionine</name>
        <dbReference type="ChEBI" id="CHEBI:59789"/>
    </ligand>
</feature>
<proteinExistence type="inferred from homology"/>
<dbReference type="EC" id="2.1.1.182" evidence="1"/>
<dbReference type="EMBL" id="CP000647">
    <property type="protein sequence ID" value="ABR75508.1"/>
    <property type="molecule type" value="Genomic_DNA"/>
</dbReference>
<dbReference type="RefSeq" id="WP_002888324.1">
    <property type="nucleotide sequence ID" value="NC_009648.1"/>
</dbReference>
<dbReference type="SMR" id="A6T4I7"/>
<dbReference type="STRING" id="272620.KPN_00048"/>
<dbReference type="jPOST" id="A6T4I7"/>
<dbReference type="PaxDb" id="272620-KPN_00048"/>
<dbReference type="EnsemblBacteria" id="ABR75508">
    <property type="protein sequence ID" value="ABR75508"/>
    <property type="gene ID" value="KPN_00048"/>
</dbReference>
<dbReference type="KEGG" id="kpn:KPN_00048"/>
<dbReference type="HOGENOM" id="CLU_041220_0_1_6"/>
<dbReference type="Proteomes" id="UP000000265">
    <property type="component" value="Chromosome"/>
</dbReference>
<dbReference type="GO" id="GO:0005829">
    <property type="term" value="C:cytosol"/>
    <property type="evidence" value="ECO:0007669"/>
    <property type="project" value="TreeGrafter"/>
</dbReference>
<dbReference type="GO" id="GO:0052908">
    <property type="term" value="F:16S rRNA (adenine(1518)-N(6)/adenine(1519)-N(6))-dimethyltransferase activity"/>
    <property type="evidence" value="ECO:0007669"/>
    <property type="project" value="UniProtKB-EC"/>
</dbReference>
<dbReference type="GO" id="GO:0003723">
    <property type="term" value="F:RNA binding"/>
    <property type="evidence" value="ECO:0007669"/>
    <property type="project" value="UniProtKB-KW"/>
</dbReference>
<dbReference type="FunFam" id="1.10.8.100:FF:000001">
    <property type="entry name" value="Ribosomal RNA small subunit methyltransferase A"/>
    <property type="match status" value="1"/>
</dbReference>
<dbReference type="FunFam" id="3.40.50.150:FF:000006">
    <property type="entry name" value="Ribosomal RNA small subunit methyltransferase A"/>
    <property type="match status" value="1"/>
</dbReference>
<dbReference type="Gene3D" id="1.10.8.100">
    <property type="entry name" value="Ribosomal RNA adenine dimethylase-like, domain 2"/>
    <property type="match status" value="1"/>
</dbReference>
<dbReference type="Gene3D" id="3.40.50.150">
    <property type="entry name" value="Vaccinia Virus protein VP39"/>
    <property type="match status" value="1"/>
</dbReference>
<dbReference type="HAMAP" id="MF_00607">
    <property type="entry name" value="16SrRNA_methyltr_A"/>
    <property type="match status" value="1"/>
</dbReference>
<dbReference type="InterPro" id="IPR001737">
    <property type="entry name" value="KsgA/Erm"/>
</dbReference>
<dbReference type="InterPro" id="IPR023165">
    <property type="entry name" value="rRNA_Ade_diMease-like_C"/>
</dbReference>
<dbReference type="InterPro" id="IPR020596">
    <property type="entry name" value="rRNA_Ade_Mease_Trfase_CS"/>
</dbReference>
<dbReference type="InterPro" id="IPR020598">
    <property type="entry name" value="rRNA_Ade_methylase_Trfase_N"/>
</dbReference>
<dbReference type="InterPro" id="IPR011530">
    <property type="entry name" value="rRNA_adenine_dimethylase"/>
</dbReference>
<dbReference type="InterPro" id="IPR029063">
    <property type="entry name" value="SAM-dependent_MTases_sf"/>
</dbReference>
<dbReference type="NCBIfam" id="TIGR00755">
    <property type="entry name" value="ksgA"/>
    <property type="match status" value="1"/>
</dbReference>
<dbReference type="PANTHER" id="PTHR11727">
    <property type="entry name" value="DIMETHYLADENOSINE TRANSFERASE"/>
    <property type="match status" value="1"/>
</dbReference>
<dbReference type="PANTHER" id="PTHR11727:SF7">
    <property type="entry name" value="DIMETHYLADENOSINE TRANSFERASE-RELATED"/>
    <property type="match status" value="1"/>
</dbReference>
<dbReference type="Pfam" id="PF00398">
    <property type="entry name" value="RrnaAD"/>
    <property type="match status" value="1"/>
</dbReference>
<dbReference type="SMART" id="SM00650">
    <property type="entry name" value="rADc"/>
    <property type="match status" value="1"/>
</dbReference>
<dbReference type="SUPFAM" id="SSF53335">
    <property type="entry name" value="S-adenosyl-L-methionine-dependent methyltransferases"/>
    <property type="match status" value="1"/>
</dbReference>
<dbReference type="PROSITE" id="PS01131">
    <property type="entry name" value="RRNA_A_DIMETH"/>
    <property type="match status" value="1"/>
</dbReference>
<dbReference type="PROSITE" id="PS51689">
    <property type="entry name" value="SAM_RNA_A_N6_MT"/>
    <property type="match status" value="1"/>
</dbReference>